<proteinExistence type="inferred from homology"/>
<organism>
    <name type="scientific">Colobus angolensis</name>
    <name type="common">Angolan colobus</name>
    <dbReference type="NCBI Taxonomy" id="54131"/>
    <lineage>
        <taxon>Eukaryota</taxon>
        <taxon>Metazoa</taxon>
        <taxon>Chordata</taxon>
        <taxon>Craniata</taxon>
        <taxon>Vertebrata</taxon>
        <taxon>Euteleostomi</taxon>
        <taxon>Mammalia</taxon>
        <taxon>Eutheria</taxon>
        <taxon>Euarchontoglires</taxon>
        <taxon>Primates</taxon>
        <taxon>Haplorrhini</taxon>
        <taxon>Catarrhini</taxon>
        <taxon>Cercopithecidae</taxon>
        <taxon>Colobinae</taxon>
        <taxon>Colobus</taxon>
    </lineage>
</organism>
<name>APOA2_COLAN</name>
<gene>
    <name type="primary">APOA2</name>
</gene>
<protein>
    <recommendedName>
        <fullName>Apolipoprotein A-II</fullName>
        <shortName>Apo-AII</shortName>
        <shortName>ApoA-II</shortName>
    </recommendedName>
    <alternativeName>
        <fullName>Apolipoprotein A2</fullName>
    </alternativeName>
    <component>
        <recommendedName>
            <fullName>Proapolipoprotein A-II</fullName>
            <shortName>ProapoA-II</shortName>
        </recommendedName>
    </component>
    <component>
        <recommendedName>
            <fullName>Truncated apolipoprotein A-II</fullName>
        </recommendedName>
    </component>
</protein>
<evidence type="ECO:0000250" key="1">
    <source>
        <dbReference type="UniProtKB" id="P02652"/>
    </source>
</evidence>
<evidence type="ECO:0000250" key="2">
    <source>
        <dbReference type="UniProtKB" id="P18656"/>
    </source>
</evidence>
<evidence type="ECO:0000255" key="3"/>
<evidence type="ECO:0000305" key="4"/>
<dbReference type="EMBL" id="JYKR01131604">
    <property type="status" value="NOT_ANNOTATED_CDS"/>
    <property type="molecule type" value="Genomic_DNA"/>
</dbReference>
<dbReference type="SMR" id="P0DP85"/>
<dbReference type="OMA" id="LTICSFE"/>
<dbReference type="GO" id="GO:0034366">
    <property type="term" value="C:spherical high-density lipoprotein particle"/>
    <property type="evidence" value="ECO:0007669"/>
    <property type="project" value="TreeGrafter"/>
</dbReference>
<dbReference type="GO" id="GO:0120020">
    <property type="term" value="F:cholesterol transfer activity"/>
    <property type="evidence" value="ECO:0007669"/>
    <property type="project" value="TreeGrafter"/>
</dbReference>
<dbReference type="GO" id="GO:0008035">
    <property type="term" value="F:high-density lipoprotein particle binding"/>
    <property type="evidence" value="ECO:0007669"/>
    <property type="project" value="TreeGrafter"/>
</dbReference>
<dbReference type="GO" id="GO:0008289">
    <property type="term" value="F:lipid binding"/>
    <property type="evidence" value="ECO:0007669"/>
    <property type="project" value="InterPro"/>
</dbReference>
<dbReference type="GO" id="GO:0042632">
    <property type="term" value="P:cholesterol homeostasis"/>
    <property type="evidence" value="ECO:0007669"/>
    <property type="project" value="TreeGrafter"/>
</dbReference>
<dbReference type="GO" id="GO:0030301">
    <property type="term" value="P:cholesterol transport"/>
    <property type="evidence" value="ECO:0007669"/>
    <property type="project" value="TreeGrafter"/>
</dbReference>
<dbReference type="GO" id="GO:0042157">
    <property type="term" value="P:lipoprotein metabolic process"/>
    <property type="evidence" value="ECO:0007669"/>
    <property type="project" value="InterPro"/>
</dbReference>
<dbReference type="GO" id="GO:0050766">
    <property type="term" value="P:positive regulation of phagocytosis"/>
    <property type="evidence" value="ECO:0000250"/>
    <property type="project" value="UniProtKB"/>
</dbReference>
<dbReference type="GO" id="GO:0050821">
    <property type="term" value="P:protein stabilization"/>
    <property type="evidence" value="ECO:0000250"/>
    <property type="project" value="UniProtKB"/>
</dbReference>
<dbReference type="Gene3D" id="6.10.250.100">
    <property type="match status" value="1"/>
</dbReference>
<dbReference type="InterPro" id="IPR006801">
    <property type="entry name" value="ApoA-II"/>
</dbReference>
<dbReference type="InterPro" id="IPR036172">
    <property type="entry name" value="ApoA-II_sf"/>
</dbReference>
<dbReference type="PANTHER" id="PTHR11027">
    <property type="entry name" value="APOLIPOPROTEIN A-II"/>
    <property type="match status" value="1"/>
</dbReference>
<dbReference type="PANTHER" id="PTHR11027:SF0">
    <property type="entry name" value="APOLIPOPROTEIN A-II"/>
    <property type="match status" value="1"/>
</dbReference>
<dbReference type="Pfam" id="PF04711">
    <property type="entry name" value="ApoA-II"/>
    <property type="match status" value="1"/>
</dbReference>
<dbReference type="SUPFAM" id="SSF82936">
    <property type="entry name" value="Apolipoprotein A-II"/>
    <property type="match status" value="1"/>
</dbReference>
<comment type="function">
    <text evidence="2">May stabilize HDL (high density lipoprotein) structure by its association with lipids, and affect the HDL metabolism.</text>
</comment>
<comment type="subunit">
    <text evidence="1">Monomer. Interacts with NAXE and NDRG1.</text>
</comment>
<comment type="subcellular location">
    <subcellularLocation>
        <location evidence="1">Secreted</location>
    </subcellularLocation>
</comment>
<comment type="similarity">
    <text evidence="4">Belongs to the apolipoprotein A2 family.</text>
</comment>
<reference key="1">
    <citation type="submission" date="2015-02" db="EMBL/GenBank/DDBJ databases">
        <authorList>
            <person name="Hughes D.S."/>
            <person name="Murali S."/>
            <person name="Raveendran M."/>
            <person name="Korchina V."/>
            <person name="Bandaranaike D."/>
            <person name="Bellair M."/>
            <person name="Blankenburg K."/>
            <person name="Chao H."/>
            <person name="Dahdouli M."/>
            <person name="Dinh H."/>
            <person name="Doddapaneni H."/>
            <person name="Gnanaolivu R."/>
            <person name="Gross S."/>
            <person name="Jayaseelan J."/>
            <person name="Jones J."/>
            <person name="Khan Z."/>
            <person name="Kovar C."/>
            <person name="Kurapati P."/>
            <person name="Le B."/>
            <person name="Lee S."/>
            <person name="Mathew T."/>
            <person name="Narasimhan A."/>
            <person name="Okwuonu G."/>
            <person name="Ongeri F."/>
            <person name="Osuji N."/>
            <person name="Qu C."/>
            <person name="Quiroz J."/>
            <person name="Rajbhandari K."/>
            <person name="Reid J.G."/>
            <person name="Santibanez J."/>
            <person name="Skinner E."/>
            <person name="Wang Y."/>
            <person name="Xin Y."/>
            <person name="Han Y."/>
            <person name="Muzny D.M."/>
            <person name="Richards S."/>
            <person name="Worley K.C."/>
            <person name="Rogers J."/>
            <person name="Gibbs R.A."/>
        </authorList>
    </citation>
    <scope>NUCLEOTIDE SEQUENCE [LARGE SCALE GENOMIC DNA]</scope>
</reference>
<reference key="2">
    <citation type="unpublished observations" date="2017-06">
        <authorList>
            <person name="Puppione D.L."/>
        </authorList>
    </citation>
    <scope>IDENTIFICATION</scope>
</reference>
<sequence length="100" mass="11214">MKLLAATVLLLTICSLEGALVRRQAEEPSVESLVSQYFQTVTDYGKDLMEKVKSPELQAQAKAYFEKSKEQLTPLVKKAGTDLVNFLSYFVELRTQPATQ</sequence>
<feature type="signal peptide" evidence="3">
    <location>
        <begin position="1"/>
        <end position="18"/>
    </location>
</feature>
<feature type="chain" id="PRO_0000441385" description="Proapolipoprotein A-II" evidence="2">
    <location>
        <begin position="19"/>
        <end position="100"/>
    </location>
</feature>
<feature type="chain" id="PRO_0000441386" description="Apolipoprotein A-II" evidence="1">
    <location>
        <begin position="24"/>
        <end position="100"/>
    </location>
</feature>
<feature type="chain" id="PRO_0000441387" description="Truncated apolipoprotein A-II" evidence="1">
    <location>
        <begin position="24"/>
        <end position="99"/>
    </location>
</feature>
<feature type="modified residue" description="Methionine sulfoxide" evidence="1">
    <location>
        <position position="49"/>
    </location>
</feature>
<feature type="modified residue" description="Phosphoserine" evidence="1">
    <location>
        <position position="54"/>
    </location>
</feature>
<feature type="modified residue" description="Phosphoserine" evidence="1">
    <location>
        <position position="68"/>
    </location>
</feature>
<accession>P0DP85</accession>
<keyword id="KW-0165">Cleavage on pair of basic residues</keyword>
<keyword id="KW-0345">HDL</keyword>
<keyword id="KW-0445">Lipid transport</keyword>
<keyword id="KW-0558">Oxidation</keyword>
<keyword id="KW-0597">Phosphoprotein</keyword>
<keyword id="KW-0964">Secreted</keyword>
<keyword id="KW-0732">Signal</keyword>
<keyword id="KW-0813">Transport</keyword>